<feature type="signal peptide" evidence="3">
    <location>
        <begin position="1"/>
        <end position="20"/>
    </location>
</feature>
<feature type="propeptide" id="PRO_0000340293" evidence="1">
    <location>
        <begin position="21"/>
        <end position="189"/>
    </location>
</feature>
<feature type="chain" id="PRO_0000340294" description="Snake venom metalloproteinase Mt-d">
    <location>
        <begin position="190"/>
        <end position="393"/>
    </location>
</feature>
<feature type="propeptide" id="PRO_0000340295" evidence="1">
    <location>
        <begin position="394"/>
        <end position="409"/>
    </location>
</feature>
<feature type="chain" id="PRO_0000340296" description="Disintegrin">
    <location>
        <begin position="410"/>
        <end position="482"/>
    </location>
</feature>
<feature type="domain" description="Peptidase M12B" evidence="5">
    <location>
        <begin position="197"/>
        <end position="393"/>
    </location>
</feature>
<feature type="domain" description="Disintegrin" evidence="4">
    <location>
        <begin position="401"/>
        <end position="482"/>
    </location>
</feature>
<feature type="short sequence motif" description="Cell attachment site">
    <location>
        <begin position="460"/>
        <end position="462"/>
    </location>
</feature>
<feature type="active site" evidence="5">
    <location>
        <position position="334"/>
    </location>
</feature>
<feature type="binding site" evidence="1">
    <location>
        <position position="200"/>
    </location>
    <ligand>
        <name>Ca(2+)</name>
        <dbReference type="ChEBI" id="CHEBI:29108"/>
    </ligand>
</feature>
<feature type="binding site" evidence="1">
    <location>
        <position position="284"/>
    </location>
    <ligand>
        <name>Ca(2+)</name>
        <dbReference type="ChEBI" id="CHEBI:29108"/>
    </ligand>
</feature>
<feature type="binding site" evidence="5">
    <location>
        <position position="333"/>
    </location>
    <ligand>
        <name>Zn(2+)</name>
        <dbReference type="ChEBI" id="CHEBI:29105"/>
        <note>catalytic</note>
    </ligand>
</feature>
<feature type="binding site" evidence="5">
    <location>
        <position position="337"/>
    </location>
    <ligand>
        <name>Zn(2+)</name>
        <dbReference type="ChEBI" id="CHEBI:29105"/>
        <note>catalytic</note>
    </ligand>
</feature>
<feature type="binding site" evidence="5">
    <location>
        <position position="343"/>
    </location>
    <ligand>
        <name>Zn(2+)</name>
        <dbReference type="ChEBI" id="CHEBI:29105"/>
        <note>catalytic</note>
    </ligand>
</feature>
<feature type="binding site" evidence="1">
    <location>
        <position position="388"/>
    </location>
    <ligand>
        <name>Ca(2+)</name>
        <dbReference type="ChEBI" id="CHEBI:29108"/>
    </ligand>
</feature>
<feature type="binding site" evidence="1">
    <location>
        <position position="391"/>
    </location>
    <ligand>
        <name>Ca(2+)</name>
        <dbReference type="ChEBI" id="CHEBI:29108"/>
    </ligand>
</feature>
<feature type="disulfide bond" evidence="5">
    <location>
        <begin position="308"/>
        <end position="388"/>
    </location>
</feature>
<feature type="disulfide bond" evidence="5">
    <location>
        <begin position="348"/>
        <end position="372"/>
    </location>
</feature>
<feature type="disulfide bond" evidence="2">
    <location>
        <begin position="415"/>
        <end position="430"/>
    </location>
</feature>
<feature type="disulfide bond" evidence="2">
    <location>
        <begin position="417"/>
        <end position="425"/>
    </location>
</feature>
<feature type="disulfide bond" evidence="2">
    <location>
        <begin position="424"/>
        <end position="447"/>
    </location>
</feature>
<feature type="disulfide bond" evidence="2">
    <location>
        <begin position="438"/>
        <end position="444"/>
    </location>
</feature>
<feature type="disulfide bond" evidence="2">
    <location>
        <begin position="443"/>
        <end position="468"/>
    </location>
</feature>
<feature type="disulfide bond" evidence="2 4">
    <location>
        <begin position="456"/>
        <end position="475"/>
    </location>
</feature>
<organism>
    <name type="scientific">Gloydius brevicauda</name>
    <name type="common">Korean slamosa snake</name>
    <name type="synonym">Agkistrodon halys brevicaudus</name>
    <dbReference type="NCBI Taxonomy" id="3148161"/>
    <lineage>
        <taxon>Eukaryota</taxon>
        <taxon>Metazoa</taxon>
        <taxon>Chordata</taxon>
        <taxon>Craniata</taxon>
        <taxon>Vertebrata</taxon>
        <taxon>Euteleostomi</taxon>
        <taxon>Lepidosauria</taxon>
        <taxon>Squamata</taxon>
        <taxon>Bifurcata</taxon>
        <taxon>Unidentata</taxon>
        <taxon>Episquamata</taxon>
        <taxon>Toxicofera</taxon>
        <taxon>Serpentes</taxon>
        <taxon>Colubroidea</taxon>
        <taxon>Viperidae</taxon>
        <taxon>Crotalinae</taxon>
        <taxon>Gloydius</taxon>
    </lineage>
</organism>
<proteinExistence type="evidence at transcript level"/>
<evidence type="ECO:0000250" key="1"/>
<evidence type="ECO:0000250" key="2">
    <source>
        <dbReference type="UniProtKB" id="Q0NZX5"/>
    </source>
</evidence>
<evidence type="ECO:0000255" key="3"/>
<evidence type="ECO:0000255" key="4">
    <source>
        <dbReference type="PROSITE-ProRule" id="PRU00068"/>
    </source>
</evidence>
<evidence type="ECO:0000255" key="5">
    <source>
        <dbReference type="PROSITE-ProRule" id="PRU00276"/>
    </source>
</evidence>
<evidence type="ECO:0000269" key="6">
    <source>
    </source>
</evidence>
<evidence type="ECO:0000305" key="7"/>
<sequence>MIQVLLVTICLAAFPYQGSSMILESGNVNDYEVVYPQKVPALPKGAVPQKYEDAMQYEFKVNGEPVVLHLEKNKGLFSKDYSETHYSPDGRKITTNPPVEDHCYYHGHIQNDADSTASISACNGLKGHFKHQGEMYLIEPLKLSDSEAHAVYKYENVEKEDEAPKMCGVTQTNWKSDEPIKASQLVVTAEQQRFPQRYIELVVVADHGMFTKYDSNLDTITTWVHELVNNINEFYRSLNVRVSLTELEIWSNQDLINVQSAAADTLEAFGDWRETDLLNRISHDNAQLLTTIDLDGNTIGLAHVGTMCDPKYSVGIVQDHSAINLLVAVTMAHELGHNLGMDHDGNQCHCGANSSVMGDVLRVGVSYEFSDCNENEYQTYVTDHNPQCILNEPLRTDTVSTPVSGNELLEAGVECDCGAPANPCCDAATCKLRPGAQCAEGLCCDQCRFMKEGTICRMARGDDMDDYCNGISAGCPRNPFHA</sequence>
<dbReference type="EC" id="3.4.24.-"/>
<dbReference type="EMBL" id="AF051789">
    <property type="protein sequence ID" value="AAD02654.1"/>
    <property type="molecule type" value="mRNA"/>
</dbReference>
<dbReference type="SMR" id="Q9PVK9"/>
<dbReference type="MEROPS" id="M12.178"/>
<dbReference type="GO" id="GO:0005576">
    <property type="term" value="C:extracellular region"/>
    <property type="evidence" value="ECO:0007669"/>
    <property type="project" value="UniProtKB-SubCell"/>
</dbReference>
<dbReference type="GO" id="GO:0005886">
    <property type="term" value="C:plasma membrane"/>
    <property type="evidence" value="ECO:0007669"/>
    <property type="project" value="TreeGrafter"/>
</dbReference>
<dbReference type="GO" id="GO:0046872">
    <property type="term" value="F:metal ion binding"/>
    <property type="evidence" value="ECO:0007669"/>
    <property type="project" value="UniProtKB-KW"/>
</dbReference>
<dbReference type="GO" id="GO:0004222">
    <property type="term" value="F:metalloendopeptidase activity"/>
    <property type="evidence" value="ECO:0007669"/>
    <property type="project" value="InterPro"/>
</dbReference>
<dbReference type="GO" id="GO:0090729">
    <property type="term" value="F:toxin activity"/>
    <property type="evidence" value="ECO:0007669"/>
    <property type="project" value="UniProtKB-KW"/>
</dbReference>
<dbReference type="GO" id="GO:0006508">
    <property type="term" value="P:proteolysis"/>
    <property type="evidence" value="ECO:0007669"/>
    <property type="project" value="UniProtKB-KW"/>
</dbReference>
<dbReference type="CDD" id="cd04269">
    <property type="entry name" value="ZnMc_adamalysin_II_like"/>
    <property type="match status" value="1"/>
</dbReference>
<dbReference type="FunFam" id="3.40.390.10:FF:000002">
    <property type="entry name" value="Disintegrin and metalloproteinase domain-containing protein 22"/>
    <property type="match status" value="1"/>
</dbReference>
<dbReference type="FunFam" id="4.10.70.10:FF:000005">
    <property type="entry name" value="Zinc metalloproteinase/disintegrin"/>
    <property type="match status" value="1"/>
</dbReference>
<dbReference type="Gene3D" id="3.40.390.10">
    <property type="entry name" value="Collagenase (Catalytic Domain)"/>
    <property type="match status" value="1"/>
</dbReference>
<dbReference type="Gene3D" id="4.10.70.10">
    <property type="entry name" value="Disintegrin domain"/>
    <property type="match status" value="1"/>
</dbReference>
<dbReference type="InterPro" id="IPR018358">
    <property type="entry name" value="Disintegrin_CS"/>
</dbReference>
<dbReference type="InterPro" id="IPR001762">
    <property type="entry name" value="Disintegrin_dom"/>
</dbReference>
<dbReference type="InterPro" id="IPR036436">
    <property type="entry name" value="Disintegrin_dom_sf"/>
</dbReference>
<dbReference type="InterPro" id="IPR024079">
    <property type="entry name" value="MetalloPept_cat_dom_sf"/>
</dbReference>
<dbReference type="InterPro" id="IPR001590">
    <property type="entry name" value="Peptidase_M12B"/>
</dbReference>
<dbReference type="InterPro" id="IPR002870">
    <property type="entry name" value="Peptidase_M12B_N"/>
</dbReference>
<dbReference type="InterPro" id="IPR034027">
    <property type="entry name" value="Reprolysin_adamalysin"/>
</dbReference>
<dbReference type="PANTHER" id="PTHR11905">
    <property type="entry name" value="ADAM A DISINTEGRIN AND METALLOPROTEASE DOMAIN"/>
    <property type="match status" value="1"/>
</dbReference>
<dbReference type="PANTHER" id="PTHR11905:SF32">
    <property type="entry name" value="DISINTEGRIN AND METALLOPROTEINASE DOMAIN-CONTAINING PROTEIN 28"/>
    <property type="match status" value="1"/>
</dbReference>
<dbReference type="Pfam" id="PF00200">
    <property type="entry name" value="Disintegrin"/>
    <property type="match status" value="1"/>
</dbReference>
<dbReference type="Pfam" id="PF01562">
    <property type="entry name" value="Pep_M12B_propep"/>
    <property type="match status" value="1"/>
</dbReference>
<dbReference type="Pfam" id="PF01421">
    <property type="entry name" value="Reprolysin"/>
    <property type="match status" value="1"/>
</dbReference>
<dbReference type="PRINTS" id="PR00289">
    <property type="entry name" value="DISINTEGRIN"/>
</dbReference>
<dbReference type="SMART" id="SM00050">
    <property type="entry name" value="DISIN"/>
    <property type="match status" value="1"/>
</dbReference>
<dbReference type="SUPFAM" id="SSF57552">
    <property type="entry name" value="Blood coagulation inhibitor (disintegrin)"/>
    <property type="match status" value="1"/>
</dbReference>
<dbReference type="SUPFAM" id="SSF55486">
    <property type="entry name" value="Metalloproteases ('zincins'), catalytic domain"/>
    <property type="match status" value="1"/>
</dbReference>
<dbReference type="PROSITE" id="PS50215">
    <property type="entry name" value="ADAM_MEPRO"/>
    <property type="match status" value="1"/>
</dbReference>
<dbReference type="PROSITE" id="PS00427">
    <property type="entry name" value="DISINTEGRIN_1"/>
    <property type="match status" value="1"/>
</dbReference>
<dbReference type="PROSITE" id="PS50214">
    <property type="entry name" value="DISINTEGRIN_2"/>
    <property type="match status" value="1"/>
</dbReference>
<dbReference type="PROSITE" id="PS00142">
    <property type="entry name" value="ZINC_PROTEASE"/>
    <property type="match status" value="1"/>
</dbReference>
<protein>
    <recommendedName>
        <fullName>Zinc metalloproteinase/disintegrin</fullName>
    </recommendedName>
    <component>
        <recommendedName>
            <fullName>Snake venom metalloproteinase Mt-d</fullName>
            <shortName>SVMP</shortName>
            <ecNumber>3.4.24.-</ecNumber>
        </recommendedName>
    </component>
    <component>
        <recommendedName>
            <fullName>Disintegrin</fullName>
        </recommendedName>
    </component>
</protein>
<comment type="function">
    <molecule>Snake venom metalloproteinase Mt-d</molecule>
    <text evidence="6">This recombinant protein hydrolyzes fibronectin, but has no effect on type I gelatin and type I to V collagens. Selectively hydrolyzes the Aalpha-chain of fibrinogen (FGA), but has no effect on fibrin.</text>
</comment>
<comment type="function">
    <molecule>Disintegrin</molecule>
    <text evidence="1">Inhibits ADP-induced platelet aggregation.</text>
</comment>
<comment type="function">
    <text evidence="6">Recombinant metalloproteinase-disintegrin Mt-d-I (393-408): hydrolyzes type I gelatin, type III and V collagens, but has no effect on type I, II, IV collagens and fibronectin. Selectively hydrolyzes the Aalpha-chain of fibrinogen, but has no effect on fibrin. May induce hemorrhage in vascular tissue. Strongly inhibits ADP-induced platelet aggregation. When concentrated, Mt-d-I undergoes autoproteolytic processing into metalloproteinase and disintegrin.</text>
</comment>
<comment type="cofactor">
    <cofactor evidence="1">
        <name>Zn(2+)</name>
        <dbReference type="ChEBI" id="CHEBI:29105"/>
    </cofactor>
    <text evidence="1">Binds 1 zinc ion per subunit.</text>
</comment>
<comment type="subunit">
    <text evidence="1">Homodimer; disulfide-linked (disintegrin).</text>
</comment>
<comment type="subcellular location">
    <subcellularLocation>
        <location evidence="1">Secreted</location>
    </subcellularLocation>
</comment>
<comment type="tissue specificity">
    <text>Expressed by the venom gland.</text>
</comment>
<comment type="miscellaneous">
    <text>The disintegrin belongs to the dimeric disintegrin subfamily.</text>
</comment>
<comment type="similarity">
    <text evidence="7">Belongs to the venom metalloproteinase (M12B) family. P-II subfamily. P-IId sub-subfamily.</text>
</comment>
<accession>Q9PVK9</accession>
<name>VM2MD_GLOBR</name>
<keyword id="KW-0106">Calcium</keyword>
<keyword id="KW-1217">Cell adhesion impairing toxin</keyword>
<keyword id="KW-1015">Disulfide bond</keyword>
<keyword id="KW-1206">Fibrinogenolytic toxin</keyword>
<keyword id="KW-1199">Hemostasis impairing toxin</keyword>
<keyword id="KW-0378">Hydrolase</keyword>
<keyword id="KW-0479">Metal-binding</keyword>
<keyword id="KW-0482">Metalloprotease</keyword>
<keyword id="KW-1201">Platelet aggregation inhibiting toxin</keyword>
<keyword id="KW-0645">Protease</keyword>
<keyword id="KW-0964">Secreted</keyword>
<keyword id="KW-0732">Signal</keyword>
<keyword id="KW-0800">Toxin</keyword>
<keyword id="KW-0862">Zinc</keyword>
<keyword id="KW-0865">Zymogen</keyword>
<reference key="1">
    <citation type="journal article" date="1999" name="Eur. J. Biochem.">
        <title>Molecular cloning and functional characterization of a snake venom metalloprotease.</title>
        <authorList>
            <person name="Jeon O.-H."/>
            <person name="Kim D.-S."/>
        </authorList>
    </citation>
    <scope>NUCLEOTIDE SEQUENCE [MRNA]</scope>
    <scope>FUNCTION</scope>
    <source>
        <tissue>Venom gland</tissue>
    </source>
</reference>